<dbReference type="EMBL" id="AE017308">
    <property type="protein sequence ID" value="AAT27722.1"/>
    <property type="molecule type" value="Genomic_DNA"/>
</dbReference>
<dbReference type="RefSeq" id="WP_011264756.1">
    <property type="nucleotide sequence ID" value="NC_006908.1"/>
</dbReference>
<dbReference type="SMR" id="Q6KI54"/>
<dbReference type="STRING" id="267748.MMOB2360"/>
<dbReference type="KEGG" id="mmo:MMOB2360"/>
<dbReference type="eggNOG" id="COG0088">
    <property type="taxonomic scope" value="Bacteria"/>
</dbReference>
<dbReference type="HOGENOM" id="CLU_041575_2_0_14"/>
<dbReference type="OrthoDB" id="9803201at2"/>
<dbReference type="Proteomes" id="UP000009072">
    <property type="component" value="Chromosome"/>
</dbReference>
<dbReference type="GO" id="GO:1990904">
    <property type="term" value="C:ribonucleoprotein complex"/>
    <property type="evidence" value="ECO:0007669"/>
    <property type="project" value="UniProtKB-KW"/>
</dbReference>
<dbReference type="GO" id="GO:0005840">
    <property type="term" value="C:ribosome"/>
    <property type="evidence" value="ECO:0007669"/>
    <property type="project" value="UniProtKB-KW"/>
</dbReference>
<dbReference type="GO" id="GO:0019843">
    <property type="term" value="F:rRNA binding"/>
    <property type="evidence" value="ECO:0007669"/>
    <property type="project" value="UniProtKB-UniRule"/>
</dbReference>
<dbReference type="GO" id="GO:0003735">
    <property type="term" value="F:structural constituent of ribosome"/>
    <property type="evidence" value="ECO:0007669"/>
    <property type="project" value="InterPro"/>
</dbReference>
<dbReference type="GO" id="GO:0006412">
    <property type="term" value="P:translation"/>
    <property type="evidence" value="ECO:0007669"/>
    <property type="project" value="UniProtKB-UniRule"/>
</dbReference>
<dbReference type="Gene3D" id="3.40.1370.10">
    <property type="match status" value="1"/>
</dbReference>
<dbReference type="HAMAP" id="MF_01328_B">
    <property type="entry name" value="Ribosomal_uL4_B"/>
    <property type="match status" value="1"/>
</dbReference>
<dbReference type="InterPro" id="IPR002136">
    <property type="entry name" value="Ribosomal_uL4"/>
</dbReference>
<dbReference type="InterPro" id="IPR013005">
    <property type="entry name" value="Ribosomal_uL4-like"/>
</dbReference>
<dbReference type="InterPro" id="IPR023574">
    <property type="entry name" value="Ribosomal_uL4_dom_sf"/>
</dbReference>
<dbReference type="NCBIfam" id="TIGR03953">
    <property type="entry name" value="rplD_bact"/>
    <property type="match status" value="1"/>
</dbReference>
<dbReference type="PANTHER" id="PTHR10746">
    <property type="entry name" value="50S RIBOSOMAL PROTEIN L4"/>
    <property type="match status" value="1"/>
</dbReference>
<dbReference type="PANTHER" id="PTHR10746:SF6">
    <property type="entry name" value="LARGE RIBOSOMAL SUBUNIT PROTEIN UL4M"/>
    <property type="match status" value="1"/>
</dbReference>
<dbReference type="Pfam" id="PF00573">
    <property type="entry name" value="Ribosomal_L4"/>
    <property type="match status" value="1"/>
</dbReference>
<dbReference type="SUPFAM" id="SSF52166">
    <property type="entry name" value="Ribosomal protein L4"/>
    <property type="match status" value="1"/>
</dbReference>
<comment type="function">
    <text evidence="1">One of the primary rRNA binding proteins, this protein initially binds near the 5'-end of the 23S rRNA. It is important during the early stages of 50S assembly. It makes multiple contacts with different domains of the 23S rRNA in the assembled 50S subunit and ribosome.</text>
</comment>
<comment type="function">
    <text evidence="1">Forms part of the polypeptide exit tunnel.</text>
</comment>
<comment type="subunit">
    <text evidence="1">Part of the 50S ribosomal subunit.</text>
</comment>
<comment type="similarity">
    <text evidence="1">Belongs to the universal ribosomal protein uL4 family.</text>
</comment>
<accession>Q6KI54</accession>
<evidence type="ECO:0000255" key="1">
    <source>
        <dbReference type="HAMAP-Rule" id="MF_01328"/>
    </source>
</evidence>
<evidence type="ECO:0000256" key="2">
    <source>
        <dbReference type="SAM" id="MobiDB-lite"/>
    </source>
</evidence>
<evidence type="ECO:0000305" key="3"/>
<keyword id="KW-1185">Reference proteome</keyword>
<keyword id="KW-0687">Ribonucleoprotein</keyword>
<keyword id="KW-0689">Ribosomal protein</keyword>
<keyword id="KW-0694">RNA-binding</keyword>
<keyword id="KW-0699">rRNA-binding</keyword>
<feature type="chain" id="PRO_0000242399" description="Large ribosomal subunit protein uL4">
    <location>
        <begin position="1"/>
        <end position="293"/>
    </location>
</feature>
<feature type="region of interest" description="Disordered" evidence="2">
    <location>
        <begin position="1"/>
        <end position="72"/>
    </location>
</feature>
<feature type="region of interest" description="Disordered" evidence="2">
    <location>
        <begin position="130"/>
        <end position="166"/>
    </location>
</feature>
<feature type="compositionally biased region" description="Basic and acidic residues" evidence="2">
    <location>
        <begin position="1"/>
        <end position="14"/>
    </location>
</feature>
<feature type="compositionally biased region" description="Basic and acidic residues" evidence="2">
    <location>
        <begin position="33"/>
        <end position="55"/>
    </location>
</feature>
<proteinExistence type="inferred from homology"/>
<reference key="1">
    <citation type="journal article" date="2004" name="Genome Res.">
        <title>The complete genome and proteome of Mycoplasma mobile.</title>
        <authorList>
            <person name="Jaffe J.D."/>
            <person name="Stange-Thomann N."/>
            <person name="Smith C."/>
            <person name="DeCaprio D."/>
            <person name="Fisher S."/>
            <person name="Butler J."/>
            <person name="Calvo S."/>
            <person name="Elkins T."/>
            <person name="FitzGerald M.G."/>
            <person name="Hafez N."/>
            <person name="Kodira C.D."/>
            <person name="Major J."/>
            <person name="Wang S."/>
            <person name="Wilkinson J."/>
            <person name="Nicol R."/>
            <person name="Nusbaum C."/>
            <person name="Birren B."/>
            <person name="Berg H.C."/>
            <person name="Church G.M."/>
        </authorList>
    </citation>
    <scope>NUCLEOTIDE SEQUENCE [LARGE SCALE GENOMIC DNA]</scope>
    <source>
        <strain>ATCC 43663 / NCTC 11711 / 163 K</strain>
    </source>
</reference>
<gene>
    <name evidence="1" type="primary">rplD</name>
    <name type="ordered locus">MMOB2360</name>
</gene>
<organism>
    <name type="scientific">Mycoplasma mobile (strain ATCC 43663 / 163K / NCTC 11711)</name>
    <name type="common">Mesomycoplasma mobile</name>
    <dbReference type="NCBI Taxonomy" id="267748"/>
    <lineage>
        <taxon>Bacteria</taxon>
        <taxon>Bacillati</taxon>
        <taxon>Mycoplasmatota</taxon>
        <taxon>Mycoplasmoidales</taxon>
        <taxon>Metamycoplasmataceae</taxon>
        <taxon>Mesomycoplasma</taxon>
    </lineage>
</organism>
<protein>
    <recommendedName>
        <fullName evidence="1">Large ribosomal subunit protein uL4</fullName>
    </recommendedName>
    <alternativeName>
        <fullName evidence="3">50S ribosomal protein L4</fullName>
    </alternativeName>
</protein>
<sequence>MAEELKKTTKEKTPVKKSSKVSASKAPTKKVTKTTEVKKADKLEKVSKPKSESTKVSKVSVKSVKTESIKSEPVKTKKSKIKVLSSKTNEAKNILFKNTVSLPKGIFGLSEEKINTQAIFDSILFERASQRQGTHSTKTRSEVSGGGKKPWKQKGTGRARAGSTRSPIWVGGGITFGPKPQKKYDFKINKKVRNLAFLSSLTLLANKNAILVEDLKLEKISSQELIKKLEDLKINNLKKILIVSDDEKIFKSGRNVQNLHVVKLNSLTVELLNETHALLLSKKDLTTLESRVK</sequence>
<name>RL4_MYCM1</name>